<proteinExistence type="inferred from homology"/>
<feature type="chain" id="PRO_0000301422" description="UDP-N-acetylmuramoylalanine--D-glutamate ligase">
    <location>
        <begin position="1"/>
        <end position="458"/>
    </location>
</feature>
<feature type="binding site" evidence="1">
    <location>
        <begin position="124"/>
        <end position="130"/>
    </location>
    <ligand>
        <name>ATP</name>
        <dbReference type="ChEBI" id="CHEBI:30616"/>
    </ligand>
</feature>
<name>MURD_CLONN</name>
<gene>
    <name evidence="1" type="primary">murD</name>
    <name type="ordered locus">NT01CX_1049</name>
</gene>
<reference key="1">
    <citation type="journal article" date="2006" name="Nat. Biotechnol.">
        <title>The genome and transcriptomes of the anti-tumor agent Clostridium novyi-NT.</title>
        <authorList>
            <person name="Bettegowda C."/>
            <person name="Huang X."/>
            <person name="Lin J."/>
            <person name="Cheong I."/>
            <person name="Kohli M."/>
            <person name="Szabo S.A."/>
            <person name="Zhang X."/>
            <person name="Diaz L.A. Jr."/>
            <person name="Velculescu V.E."/>
            <person name="Parmigiani G."/>
            <person name="Kinzler K.W."/>
            <person name="Vogelstein B."/>
            <person name="Zhou S."/>
        </authorList>
    </citation>
    <scope>NUCLEOTIDE SEQUENCE [LARGE SCALE GENOMIC DNA]</scope>
    <source>
        <strain>NT</strain>
    </source>
</reference>
<organism>
    <name type="scientific">Clostridium novyi (strain NT)</name>
    <dbReference type="NCBI Taxonomy" id="386415"/>
    <lineage>
        <taxon>Bacteria</taxon>
        <taxon>Bacillati</taxon>
        <taxon>Bacillota</taxon>
        <taxon>Clostridia</taxon>
        <taxon>Eubacteriales</taxon>
        <taxon>Clostridiaceae</taxon>
        <taxon>Clostridium</taxon>
    </lineage>
</organism>
<keyword id="KW-0067">ATP-binding</keyword>
<keyword id="KW-0131">Cell cycle</keyword>
<keyword id="KW-0132">Cell division</keyword>
<keyword id="KW-0133">Cell shape</keyword>
<keyword id="KW-0961">Cell wall biogenesis/degradation</keyword>
<keyword id="KW-0963">Cytoplasm</keyword>
<keyword id="KW-0436">Ligase</keyword>
<keyword id="KW-0547">Nucleotide-binding</keyword>
<keyword id="KW-0573">Peptidoglycan synthesis</keyword>
<keyword id="KW-1185">Reference proteome</keyword>
<accession>A0PXN6</accession>
<protein>
    <recommendedName>
        <fullName evidence="1">UDP-N-acetylmuramoylalanine--D-glutamate ligase</fullName>
        <ecNumber evidence="1">6.3.2.9</ecNumber>
    </recommendedName>
    <alternativeName>
        <fullName evidence="1">D-glutamic acid-adding enzyme</fullName>
    </alternativeName>
    <alternativeName>
        <fullName evidence="1">UDP-N-acetylmuramoyl-L-alanyl-D-glutamate synthetase</fullName>
    </alternativeName>
</protein>
<comment type="function">
    <text evidence="1">Cell wall formation. Catalyzes the addition of glutamate to the nucleotide precursor UDP-N-acetylmuramoyl-L-alanine (UMA).</text>
</comment>
<comment type="catalytic activity">
    <reaction evidence="1">
        <text>UDP-N-acetyl-alpha-D-muramoyl-L-alanine + D-glutamate + ATP = UDP-N-acetyl-alpha-D-muramoyl-L-alanyl-D-glutamate + ADP + phosphate + H(+)</text>
        <dbReference type="Rhea" id="RHEA:16429"/>
        <dbReference type="ChEBI" id="CHEBI:15378"/>
        <dbReference type="ChEBI" id="CHEBI:29986"/>
        <dbReference type="ChEBI" id="CHEBI:30616"/>
        <dbReference type="ChEBI" id="CHEBI:43474"/>
        <dbReference type="ChEBI" id="CHEBI:83898"/>
        <dbReference type="ChEBI" id="CHEBI:83900"/>
        <dbReference type="ChEBI" id="CHEBI:456216"/>
        <dbReference type="EC" id="6.3.2.9"/>
    </reaction>
</comment>
<comment type="pathway">
    <text evidence="1">Cell wall biogenesis; peptidoglycan biosynthesis.</text>
</comment>
<comment type="subcellular location">
    <subcellularLocation>
        <location evidence="1">Cytoplasm</location>
    </subcellularLocation>
</comment>
<comment type="similarity">
    <text evidence="1">Belongs to the MurCDEF family.</text>
</comment>
<dbReference type="EC" id="6.3.2.9" evidence="1"/>
<dbReference type="EMBL" id="CP000382">
    <property type="protein sequence ID" value="ABK61515.1"/>
    <property type="molecule type" value="Genomic_DNA"/>
</dbReference>
<dbReference type="RefSeq" id="WP_011721159.1">
    <property type="nucleotide sequence ID" value="NC_008593.1"/>
</dbReference>
<dbReference type="SMR" id="A0PXN6"/>
<dbReference type="STRING" id="386415.NT01CX_1049"/>
<dbReference type="KEGG" id="cno:NT01CX_1049"/>
<dbReference type="PATRIC" id="fig|386415.7.peg.164"/>
<dbReference type="eggNOG" id="COG0771">
    <property type="taxonomic scope" value="Bacteria"/>
</dbReference>
<dbReference type="HOGENOM" id="CLU_032540_0_1_9"/>
<dbReference type="UniPathway" id="UPA00219"/>
<dbReference type="Proteomes" id="UP000008220">
    <property type="component" value="Chromosome"/>
</dbReference>
<dbReference type="GO" id="GO:0005737">
    <property type="term" value="C:cytoplasm"/>
    <property type="evidence" value="ECO:0007669"/>
    <property type="project" value="UniProtKB-SubCell"/>
</dbReference>
<dbReference type="GO" id="GO:0005524">
    <property type="term" value="F:ATP binding"/>
    <property type="evidence" value="ECO:0007669"/>
    <property type="project" value="UniProtKB-UniRule"/>
</dbReference>
<dbReference type="GO" id="GO:0008764">
    <property type="term" value="F:UDP-N-acetylmuramoylalanine-D-glutamate ligase activity"/>
    <property type="evidence" value="ECO:0007669"/>
    <property type="project" value="UniProtKB-UniRule"/>
</dbReference>
<dbReference type="GO" id="GO:0051301">
    <property type="term" value="P:cell division"/>
    <property type="evidence" value="ECO:0007669"/>
    <property type="project" value="UniProtKB-KW"/>
</dbReference>
<dbReference type="GO" id="GO:0071555">
    <property type="term" value="P:cell wall organization"/>
    <property type="evidence" value="ECO:0007669"/>
    <property type="project" value="UniProtKB-KW"/>
</dbReference>
<dbReference type="GO" id="GO:0009252">
    <property type="term" value="P:peptidoglycan biosynthetic process"/>
    <property type="evidence" value="ECO:0007669"/>
    <property type="project" value="UniProtKB-UniRule"/>
</dbReference>
<dbReference type="GO" id="GO:0008360">
    <property type="term" value="P:regulation of cell shape"/>
    <property type="evidence" value="ECO:0007669"/>
    <property type="project" value="UniProtKB-KW"/>
</dbReference>
<dbReference type="Gene3D" id="3.90.190.20">
    <property type="entry name" value="Mur ligase, C-terminal domain"/>
    <property type="match status" value="1"/>
</dbReference>
<dbReference type="Gene3D" id="3.40.1190.10">
    <property type="entry name" value="Mur-like, catalytic domain"/>
    <property type="match status" value="1"/>
</dbReference>
<dbReference type="Gene3D" id="3.40.50.720">
    <property type="entry name" value="NAD(P)-binding Rossmann-like Domain"/>
    <property type="match status" value="1"/>
</dbReference>
<dbReference type="HAMAP" id="MF_00639">
    <property type="entry name" value="MurD"/>
    <property type="match status" value="1"/>
</dbReference>
<dbReference type="InterPro" id="IPR036565">
    <property type="entry name" value="Mur-like_cat_sf"/>
</dbReference>
<dbReference type="InterPro" id="IPR004101">
    <property type="entry name" value="Mur_ligase_C"/>
</dbReference>
<dbReference type="InterPro" id="IPR036615">
    <property type="entry name" value="Mur_ligase_C_dom_sf"/>
</dbReference>
<dbReference type="InterPro" id="IPR013221">
    <property type="entry name" value="Mur_ligase_cen"/>
</dbReference>
<dbReference type="InterPro" id="IPR005762">
    <property type="entry name" value="MurD"/>
</dbReference>
<dbReference type="NCBIfam" id="TIGR01087">
    <property type="entry name" value="murD"/>
    <property type="match status" value="1"/>
</dbReference>
<dbReference type="PANTHER" id="PTHR43692">
    <property type="entry name" value="UDP-N-ACETYLMURAMOYLALANINE--D-GLUTAMATE LIGASE"/>
    <property type="match status" value="1"/>
</dbReference>
<dbReference type="PANTHER" id="PTHR43692:SF1">
    <property type="entry name" value="UDP-N-ACETYLMURAMOYLALANINE--D-GLUTAMATE LIGASE"/>
    <property type="match status" value="1"/>
</dbReference>
<dbReference type="Pfam" id="PF02875">
    <property type="entry name" value="Mur_ligase_C"/>
    <property type="match status" value="1"/>
</dbReference>
<dbReference type="Pfam" id="PF08245">
    <property type="entry name" value="Mur_ligase_M"/>
    <property type="match status" value="1"/>
</dbReference>
<dbReference type="Pfam" id="PF21799">
    <property type="entry name" value="MurD-like_N"/>
    <property type="match status" value="1"/>
</dbReference>
<dbReference type="SUPFAM" id="SSF51984">
    <property type="entry name" value="MurCD N-terminal domain"/>
    <property type="match status" value="1"/>
</dbReference>
<dbReference type="SUPFAM" id="SSF53623">
    <property type="entry name" value="MurD-like peptide ligases, catalytic domain"/>
    <property type="match status" value="1"/>
</dbReference>
<dbReference type="SUPFAM" id="SSF53244">
    <property type="entry name" value="MurD-like peptide ligases, peptide-binding domain"/>
    <property type="match status" value="1"/>
</dbReference>
<evidence type="ECO:0000255" key="1">
    <source>
        <dbReference type="HAMAP-Rule" id="MF_00639"/>
    </source>
</evidence>
<sequence length="458" mass="51212">MKKTFNEFKDFIRNKEVAVVGIGISNIPLIHFLVKLGANVTAFDKKSEEALGEVAVEFKSKGIKLQLGENYLDNLEGFDVVFKTPSMRIDNPALVKAKESGAYITSEMEEFIKYCPAKIFGITGSDGKTTTTTLVYNILMTEGYKTWVGGNIGNPLFSNIEEMKEEDKVVLELSSFQLMTMKEEINCALVTNLSPNHLDIHKDMDEYVDAKKNIFKYQEVNDLLVLNRDNDITNSLVKEAKSRVMQFSRKEEIESGAYLNGDKLVLLGKEVCALEDIKLKGMHNVENLLAAFCLVSEDASIESMAKVATTFTGVEHRCEFVREIDGVKYYNDSIASSPTRTIAGLRAFEKPVILIAGGYDKHIPFEPLAEEGLDKIQALVLTGLTKNKIKDAFDKAMKDRGINIPIYMEDGFNEAIYRAKDIANEGDIITLSPACASFDMFPNFEVRGNKFKEIVNNL</sequence>